<organism>
    <name type="scientific">Paracidovorax citrulli (strain AAC00-1)</name>
    <name type="common">Acidovorax citrulli</name>
    <dbReference type="NCBI Taxonomy" id="397945"/>
    <lineage>
        <taxon>Bacteria</taxon>
        <taxon>Pseudomonadati</taxon>
        <taxon>Pseudomonadota</taxon>
        <taxon>Betaproteobacteria</taxon>
        <taxon>Burkholderiales</taxon>
        <taxon>Comamonadaceae</taxon>
        <taxon>Paracidovorax</taxon>
    </lineage>
</organism>
<gene>
    <name evidence="1" type="primary">acpP</name>
    <name type="ordered locus">Aave_1186</name>
</gene>
<keyword id="KW-0963">Cytoplasm</keyword>
<keyword id="KW-0275">Fatty acid biosynthesis</keyword>
<keyword id="KW-0276">Fatty acid metabolism</keyword>
<keyword id="KW-0444">Lipid biosynthesis</keyword>
<keyword id="KW-0443">Lipid metabolism</keyword>
<keyword id="KW-0596">Phosphopantetheine</keyword>
<keyword id="KW-0597">Phosphoprotein</keyword>
<proteinExistence type="inferred from homology"/>
<feature type="chain" id="PRO_1000066539" description="Acyl carrier protein">
    <location>
        <begin position="1"/>
        <end position="79"/>
    </location>
</feature>
<feature type="domain" description="Carrier" evidence="2">
    <location>
        <begin position="2"/>
        <end position="77"/>
    </location>
</feature>
<feature type="modified residue" description="O-(pantetheine 4'-phosphoryl)serine" evidence="2">
    <location>
        <position position="37"/>
    </location>
</feature>
<protein>
    <recommendedName>
        <fullName evidence="1">Acyl carrier protein</fullName>
        <shortName evidence="1">ACP</shortName>
    </recommendedName>
</protein>
<sequence length="79" mass="8666">MSDIEARVKKIIAEQLGVEESQVTNEKAFVADLGADSLDTVELVMALEDEFGIEIPDEDAEKITTVQNAIDYANTHQKA</sequence>
<accession>A1TLE0</accession>
<reference key="1">
    <citation type="submission" date="2006-12" db="EMBL/GenBank/DDBJ databases">
        <title>Complete sequence of Acidovorax avenae subsp. citrulli AAC00-1.</title>
        <authorList>
            <person name="Copeland A."/>
            <person name="Lucas S."/>
            <person name="Lapidus A."/>
            <person name="Barry K."/>
            <person name="Detter J.C."/>
            <person name="Glavina del Rio T."/>
            <person name="Dalin E."/>
            <person name="Tice H."/>
            <person name="Pitluck S."/>
            <person name="Kiss H."/>
            <person name="Brettin T."/>
            <person name="Bruce D."/>
            <person name="Han C."/>
            <person name="Tapia R."/>
            <person name="Gilna P."/>
            <person name="Schmutz J."/>
            <person name="Larimer F."/>
            <person name="Land M."/>
            <person name="Hauser L."/>
            <person name="Kyrpides N."/>
            <person name="Kim E."/>
            <person name="Stahl D."/>
            <person name="Richardson P."/>
        </authorList>
    </citation>
    <scope>NUCLEOTIDE SEQUENCE [LARGE SCALE GENOMIC DNA]</scope>
    <source>
        <strain>AAC00-1</strain>
    </source>
</reference>
<name>ACP_PARC0</name>
<dbReference type="EMBL" id="CP000512">
    <property type="protein sequence ID" value="ABM31778.1"/>
    <property type="molecule type" value="Genomic_DNA"/>
</dbReference>
<dbReference type="RefSeq" id="WP_003058049.1">
    <property type="nucleotide sequence ID" value="NC_008752.1"/>
</dbReference>
<dbReference type="SMR" id="A1TLE0"/>
<dbReference type="STRING" id="397945.Aave_1186"/>
<dbReference type="GeneID" id="94690733"/>
<dbReference type="KEGG" id="aav:Aave_1186"/>
<dbReference type="eggNOG" id="COG0236">
    <property type="taxonomic scope" value="Bacteria"/>
</dbReference>
<dbReference type="HOGENOM" id="CLU_108696_5_1_4"/>
<dbReference type="OrthoDB" id="9804551at2"/>
<dbReference type="UniPathway" id="UPA00094"/>
<dbReference type="Proteomes" id="UP000002596">
    <property type="component" value="Chromosome"/>
</dbReference>
<dbReference type="GO" id="GO:0005829">
    <property type="term" value="C:cytosol"/>
    <property type="evidence" value="ECO:0007669"/>
    <property type="project" value="TreeGrafter"/>
</dbReference>
<dbReference type="GO" id="GO:0016020">
    <property type="term" value="C:membrane"/>
    <property type="evidence" value="ECO:0007669"/>
    <property type="project" value="GOC"/>
</dbReference>
<dbReference type="GO" id="GO:0000035">
    <property type="term" value="F:acyl binding"/>
    <property type="evidence" value="ECO:0007669"/>
    <property type="project" value="TreeGrafter"/>
</dbReference>
<dbReference type="GO" id="GO:0000036">
    <property type="term" value="F:acyl carrier activity"/>
    <property type="evidence" value="ECO:0007669"/>
    <property type="project" value="UniProtKB-UniRule"/>
</dbReference>
<dbReference type="GO" id="GO:0031177">
    <property type="term" value="F:phosphopantetheine binding"/>
    <property type="evidence" value="ECO:0007669"/>
    <property type="project" value="InterPro"/>
</dbReference>
<dbReference type="GO" id="GO:0009245">
    <property type="term" value="P:lipid A biosynthetic process"/>
    <property type="evidence" value="ECO:0007669"/>
    <property type="project" value="TreeGrafter"/>
</dbReference>
<dbReference type="FunFam" id="1.10.1200.10:FF:000001">
    <property type="entry name" value="Acyl carrier protein"/>
    <property type="match status" value="1"/>
</dbReference>
<dbReference type="Gene3D" id="1.10.1200.10">
    <property type="entry name" value="ACP-like"/>
    <property type="match status" value="1"/>
</dbReference>
<dbReference type="HAMAP" id="MF_01217">
    <property type="entry name" value="Acyl_carrier"/>
    <property type="match status" value="1"/>
</dbReference>
<dbReference type="InterPro" id="IPR003231">
    <property type="entry name" value="ACP"/>
</dbReference>
<dbReference type="InterPro" id="IPR036736">
    <property type="entry name" value="ACP-like_sf"/>
</dbReference>
<dbReference type="InterPro" id="IPR020806">
    <property type="entry name" value="PKS_PP-bd"/>
</dbReference>
<dbReference type="InterPro" id="IPR009081">
    <property type="entry name" value="PP-bd_ACP"/>
</dbReference>
<dbReference type="InterPro" id="IPR006162">
    <property type="entry name" value="Ppantetheine_attach_site"/>
</dbReference>
<dbReference type="NCBIfam" id="TIGR00517">
    <property type="entry name" value="acyl_carrier"/>
    <property type="match status" value="1"/>
</dbReference>
<dbReference type="NCBIfam" id="NF002148">
    <property type="entry name" value="PRK00982.1-2"/>
    <property type="match status" value="1"/>
</dbReference>
<dbReference type="NCBIfam" id="NF002149">
    <property type="entry name" value="PRK00982.1-3"/>
    <property type="match status" value="1"/>
</dbReference>
<dbReference type="NCBIfam" id="NF002150">
    <property type="entry name" value="PRK00982.1-4"/>
    <property type="match status" value="1"/>
</dbReference>
<dbReference type="NCBIfam" id="NF002151">
    <property type="entry name" value="PRK00982.1-5"/>
    <property type="match status" value="1"/>
</dbReference>
<dbReference type="PANTHER" id="PTHR20863">
    <property type="entry name" value="ACYL CARRIER PROTEIN"/>
    <property type="match status" value="1"/>
</dbReference>
<dbReference type="PANTHER" id="PTHR20863:SF76">
    <property type="entry name" value="CARRIER DOMAIN-CONTAINING PROTEIN"/>
    <property type="match status" value="1"/>
</dbReference>
<dbReference type="Pfam" id="PF00550">
    <property type="entry name" value="PP-binding"/>
    <property type="match status" value="1"/>
</dbReference>
<dbReference type="SMART" id="SM00823">
    <property type="entry name" value="PKS_PP"/>
    <property type="match status" value="1"/>
</dbReference>
<dbReference type="SUPFAM" id="SSF47336">
    <property type="entry name" value="ACP-like"/>
    <property type="match status" value="1"/>
</dbReference>
<dbReference type="PROSITE" id="PS50075">
    <property type="entry name" value="CARRIER"/>
    <property type="match status" value="1"/>
</dbReference>
<dbReference type="PROSITE" id="PS00012">
    <property type="entry name" value="PHOSPHOPANTETHEINE"/>
    <property type="match status" value="1"/>
</dbReference>
<evidence type="ECO:0000255" key="1">
    <source>
        <dbReference type="HAMAP-Rule" id="MF_01217"/>
    </source>
</evidence>
<evidence type="ECO:0000255" key="2">
    <source>
        <dbReference type="PROSITE-ProRule" id="PRU00258"/>
    </source>
</evidence>
<comment type="function">
    <text evidence="1">Carrier of the growing fatty acid chain in fatty acid biosynthesis.</text>
</comment>
<comment type="pathway">
    <text evidence="1">Lipid metabolism; fatty acid biosynthesis.</text>
</comment>
<comment type="subcellular location">
    <subcellularLocation>
        <location evidence="1">Cytoplasm</location>
    </subcellularLocation>
</comment>
<comment type="PTM">
    <text evidence="1">4'-phosphopantetheine is transferred from CoA to a specific serine of apo-ACP by AcpS. This modification is essential for activity because fatty acids are bound in thioester linkage to the sulfhydryl of the prosthetic group.</text>
</comment>
<comment type="similarity">
    <text evidence="1">Belongs to the acyl carrier protein (ACP) family.</text>
</comment>